<protein>
    <recommendedName>
        <fullName evidence="1">Small ribosomal subunit protein uS7</fullName>
    </recommendedName>
    <alternativeName>
        <fullName evidence="2">30S ribosomal protein S7</fullName>
    </alternativeName>
</protein>
<comment type="function">
    <text evidence="1">One of the primary rRNA binding proteins, it binds directly to 16S rRNA where it nucleates assembly of the head domain of the 30S subunit. Is located at the subunit interface close to the decoding center, probably blocks exit of the E-site tRNA.</text>
</comment>
<comment type="subunit">
    <text evidence="1">Part of the 30S ribosomal subunit. Contacts proteins S9 and S11.</text>
</comment>
<comment type="similarity">
    <text evidence="1">Belongs to the universal ribosomal protein uS7 family.</text>
</comment>
<organism>
    <name type="scientific">Granulibacter bethesdensis (strain ATCC BAA-1260 / CGDNIH1)</name>
    <dbReference type="NCBI Taxonomy" id="391165"/>
    <lineage>
        <taxon>Bacteria</taxon>
        <taxon>Pseudomonadati</taxon>
        <taxon>Pseudomonadota</taxon>
        <taxon>Alphaproteobacteria</taxon>
        <taxon>Acetobacterales</taxon>
        <taxon>Acetobacteraceae</taxon>
        <taxon>Granulibacter</taxon>
    </lineage>
</organism>
<sequence length="158" mass="18167">MSRRRRAVKREILPDPKFGDIVITRFMNALMYDGKKSVAEGIVYGALDVLKKRGGNQADPVRMFHEALDNVKPAVEVRSRRVGGATYQVPVEVRADRRQALAIRWIIDASRKRGEHTMEERLSNELLDAVHNRGSAVKKREDTHRMAEANKAFSHYRW</sequence>
<feature type="chain" id="PRO_1000014199" description="Small ribosomal subunit protein uS7">
    <location>
        <begin position="1"/>
        <end position="158"/>
    </location>
</feature>
<dbReference type="EMBL" id="CP000394">
    <property type="protein sequence ID" value="ABI61449.1"/>
    <property type="molecule type" value="Genomic_DNA"/>
</dbReference>
<dbReference type="RefSeq" id="WP_011631259.1">
    <property type="nucleotide sequence ID" value="NC_008343.2"/>
</dbReference>
<dbReference type="SMR" id="Q0BUQ3"/>
<dbReference type="STRING" id="391165.GbCGDNIH1_0551"/>
<dbReference type="GeneID" id="69744804"/>
<dbReference type="KEGG" id="gbe:GbCGDNIH1_0551"/>
<dbReference type="eggNOG" id="COG0049">
    <property type="taxonomic scope" value="Bacteria"/>
</dbReference>
<dbReference type="HOGENOM" id="CLU_072226_1_1_5"/>
<dbReference type="OrthoDB" id="9807653at2"/>
<dbReference type="Proteomes" id="UP000001963">
    <property type="component" value="Chromosome"/>
</dbReference>
<dbReference type="GO" id="GO:0015935">
    <property type="term" value="C:small ribosomal subunit"/>
    <property type="evidence" value="ECO:0007669"/>
    <property type="project" value="InterPro"/>
</dbReference>
<dbReference type="GO" id="GO:0019843">
    <property type="term" value="F:rRNA binding"/>
    <property type="evidence" value="ECO:0007669"/>
    <property type="project" value="UniProtKB-UniRule"/>
</dbReference>
<dbReference type="GO" id="GO:0003735">
    <property type="term" value="F:structural constituent of ribosome"/>
    <property type="evidence" value="ECO:0007669"/>
    <property type="project" value="InterPro"/>
</dbReference>
<dbReference type="GO" id="GO:0000049">
    <property type="term" value="F:tRNA binding"/>
    <property type="evidence" value="ECO:0007669"/>
    <property type="project" value="UniProtKB-UniRule"/>
</dbReference>
<dbReference type="GO" id="GO:0006412">
    <property type="term" value="P:translation"/>
    <property type="evidence" value="ECO:0007669"/>
    <property type="project" value="UniProtKB-UniRule"/>
</dbReference>
<dbReference type="CDD" id="cd14869">
    <property type="entry name" value="uS7_Bacteria"/>
    <property type="match status" value="1"/>
</dbReference>
<dbReference type="FunFam" id="1.10.455.10:FF:000001">
    <property type="entry name" value="30S ribosomal protein S7"/>
    <property type="match status" value="1"/>
</dbReference>
<dbReference type="Gene3D" id="1.10.455.10">
    <property type="entry name" value="Ribosomal protein S7 domain"/>
    <property type="match status" value="1"/>
</dbReference>
<dbReference type="HAMAP" id="MF_00480_B">
    <property type="entry name" value="Ribosomal_uS7_B"/>
    <property type="match status" value="1"/>
</dbReference>
<dbReference type="InterPro" id="IPR000235">
    <property type="entry name" value="Ribosomal_uS7"/>
</dbReference>
<dbReference type="InterPro" id="IPR005717">
    <property type="entry name" value="Ribosomal_uS7_bac/org-type"/>
</dbReference>
<dbReference type="InterPro" id="IPR020606">
    <property type="entry name" value="Ribosomal_uS7_CS"/>
</dbReference>
<dbReference type="InterPro" id="IPR023798">
    <property type="entry name" value="Ribosomal_uS7_dom"/>
</dbReference>
<dbReference type="InterPro" id="IPR036823">
    <property type="entry name" value="Ribosomal_uS7_dom_sf"/>
</dbReference>
<dbReference type="NCBIfam" id="TIGR01029">
    <property type="entry name" value="rpsG_bact"/>
    <property type="match status" value="1"/>
</dbReference>
<dbReference type="PANTHER" id="PTHR11205">
    <property type="entry name" value="RIBOSOMAL PROTEIN S7"/>
    <property type="match status" value="1"/>
</dbReference>
<dbReference type="Pfam" id="PF00177">
    <property type="entry name" value="Ribosomal_S7"/>
    <property type="match status" value="1"/>
</dbReference>
<dbReference type="PIRSF" id="PIRSF002122">
    <property type="entry name" value="RPS7p_RPS7a_RPS5e_RPS7o"/>
    <property type="match status" value="1"/>
</dbReference>
<dbReference type="SUPFAM" id="SSF47973">
    <property type="entry name" value="Ribosomal protein S7"/>
    <property type="match status" value="1"/>
</dbReference>
<dbReference type="PROSITE" id="PS00052">
    <property type="entry name" value="RIBOSOMAL_S7"/>
    <property type="match status" value="1"/>
</dbReference>
<name>RS7_GRABC</name>
<gene>
    <name evidence="1" type="primary">rpsG</name>
    <name type="ordered locus">GbCGDNIH1_0551</name>
</gene>
<proteinExistence type="inferred from homology"/>
<evidence type="ECO:0000255" key="1">
    <source>
        <dbReference type="HAMAP-Rule" id="MF_00480"/>
    </source>
</evidence>
<evidence type="ECO:0000305" key="2"/>
<reference key="1">
    <citation type="journal article" date="2007" name="J. Bacteriol.">
        <title>Genome sequence analysis of the emerging human pathogenic acetic acid bacterium Granulibacter bethesdensis.</title>
        <authorList>
            <person name="Greenberg D.E."/>
            <person name="Porcella S.F."/>
            <person name="Zelazny A.M."/>
            <person name="Virtaneva K."/>
            <person name="Sturdevant D.E."/>
            <person name="Kupko J.J. III"/>
            <person name="Barbian K.D."/>
            <person name="Babar A."/>
            <person name="Dorward D.W."/>
            <person name="Holland S.M."/>
        </authorList>
    </citation>
    <scope>NUCLEOTIDE SEQUENCE [LARGE SCALE GENOMIC DNA]</scope>
    <source>
        <strain>ATCC BAA-1260 / CGDNIH1</strain>
    </source>
</reference>
<keyword id="KW-1185">Reference proteome</keyword>
<keyword id="KW-0687">Ribonucleoprotein</keyword>
<keyword id="KW-0689">Ribosomal protein</keyword>
<keyword id="KW-0694">RNA-binding</keyword>
<keyword id="KW-0699">rRNA-binding</keyword>
<keyword id="KW-0820">tRNA-binding</keyword>
<accession>Q0BUQ3</accession>